<sequence length="386" mass="43654">MRFFLSPPHMGGNELKYIEEVFKSNYIAPLGEFVNRFEQSVKAYSKSENALALNSATAALHLALRVAGVKQDDIVLASSFTFIASVAPICYLKAKPVFIDCDETYNIDVDLLKLAIKECEKKPKALILTHLYGNAAKMDEIVEICKENEIVLIEDAAEALGSFYKNKALGTFGEFGAYSYNGNKIITTSGGGMLIGKNKEKIEKARFYSTQARENCLHYEHLDYGYNYRLSNVLGAIGVAQMEVLEQRVLKKREIYEWYKEFLGECFSFLDELENSRSNRWLSTALIDFDKNELNSCQKDINISQKNITLHPKISKLIEDLKNEQIETRPLWKAMHAQEVFKGAKAYLNGNSELFFQKGICLPSGTAMSKDDVYEISKLILKSIKA</sequence>
<keyword id="KW-0002">3D-structure</keyword>
<keyword id="KW-0032">Aminotransferase</keyword>
<keyword id="KW-0663">Pyridoxal phosphate</keyword>
<keyword id="KW-1185">Reference proteome</keyword>
<keyword id="KW-0808">Transferase</keyword>
<name>PGLE_CAMJE</name>
<comment type="function">
    <text evidence="2 3">Aminotransferase involved in the bacillosamine biosynthesis pathway by producing UDP-4-amino-4,6-dideoxy-alpha-D-GlcNAc (UDP-2-acetamido-4-amino-2,4,6-trideoxy-alpha-D-glucopyranose), a precursor used in the production of the glycan component 2,4-diacetamido-2,4,6-trideoxy-alpha-D-glucopyranose. Required for host colonization and virulence. Involved in the N-linked protein glycosylation pathway.</text>
</comment>
<comment type="catalytic activity">
    <reaction evidence="2 3">
        <text>UDP-N-acetylbacillosamine + 2-oxoglutarate = UDP-2-acetamido-2,6-dideoxy-alpha-D-xylo-hex-4-ulose + L-glutamate</text>
        <dbReference type="Rhea" id="RHEA:31663"/>
        <dbReference type="ChEBI" id="CHEBI:16810"/>
        <dbReference type="ChEBI" id="CHEBI:29985"/>
        <dbReference type="ChEBI" id="CHEBI:62375"/>
        <dbReference type="ChEBI" id="CHEBI:63277"/>
        <dbReference type="EC" id="2.6.1.34"/>
    </reaction>
</comment>
<comment type="cofactor">
    <cofactor evidence="3">
        <name>pyridoxal 5'-phosphate</name>
        <dbReference type="ChEBI" id="CHEBI:597326"/>
    </cofactor>
</comment>
<comment type="biophysicochemical properties">
    <kinetics>
        <KM evidence="2 3">0.048 mM for UDP-4-amino-4,6-dideoxy-alpha-D-N-acetyl-D-glucosamine</KM>
        <KM evidence="2 3">0.61 mM for UDP-4-amino-4,6-dideoxy-alpha-D-N-acetyl-D-glucosamine</KM>
        <text evidence="2 3">kcat is 144 min(-1) (PubMed:16286454). kcat is 14.9 min(-1) (PubMed:16690622).</text>
    </kinetics>
</comment>
<comment type="pathway">
    <text>Protein modification; protein glycosylation.</text>
</comment>
<comment type="disruption phenotype">
    <text evidence="3">Cells are impaired for flagella-mediated motility, for invasion of intestinal epithelial cells and for persistence in the chicken intestine.</text>
</comment>
<comment type="similarity">
    <text evidence="4">Belongs to the DegT/DnrJ/EryC1 family.</text>
</comment>
<dbReference type="EC" id="2.6.1.34"/>
<dbReference type="EMBL" id="AL111168">
    <property type="protein sequence ID" value="CAL35238.1"/>
    <property type="molecule type" value="Genomic_DNA"/>
</dbReference>
<dbReference type="PIR" id="D81316">
    <property type="entry name" value="D81316"/>
</dbReference>
<dbReference type="RefSeq" id="WP_002852877.1">
    <property type="nucleotide sequence ID" value="NZ_SZUC01000001.1"/>
</dbReference>
<dbReference type="RefSeq" id="YP_002344514.1">
    <property type="nucleotide sequence ID" value="NC_002163.1"/>
</dbReference>
<dbReference type="PDB" id="4ZTC">
    <property type="method" value="X-ray"/>
    <property type="resolution" value="2.00 A"/>
    <property type="chains" value="A=1-386"/>
</dbReference>
<dbReference type="PDBsum" id="4ZTC"/>
<dbReference type="SMR" id="Q0P9D3"/>
<dbReference type="IntAct" id="Q0P9D3">
    <property type="interactions" value="2"/>
</dbReference>
<dbReference type="STRING" id="192222.Cj1121c"/>
<dbReference type="PaxDb" id="192222-Cj1121c"/>
<dbReference type="EnsemblBacteria" id="CAL35238">
    <property type="protein sequence ID" value="CAL35238"/>
    <property type="gene ID" value="Cj1121c"/>
</dbReference>
<dbReference type="GeneID" id="905412"/>
<dbReference type="KEGG" id="cje:Cj1121c"/>
<dbReference type="PATRIC" id="fig|192222.6.peg.1103"/>
<dbReference type="eggNOG" id="COG0399">
    <property type="taxonomic scope" value="Bacteria"/>
</dbReference>
<dbReference type="HOGENOM" id="CLU_033332_2_1_7"/>
<dbReference type="OrthoDB" id="9766188at2"/>
<dbReference type="BioCyc" id="MetaCyc:MONOMER-17319"/>
<dbReference type="BRENDA" id="2.6.1.34">
    <property type="organism ID" value="13746"/>
</dbReference>
<dbReference type="UniPathway" id="UPA00378"/>
<dbReference type="EvolutionaryTrace" id="Q0P9D3"/>
<dbReference type="PHI-base" id="PHI:9940"/>
<dbReference type="Proteomes" id="UP000000799">
    <property type="component" value="Chromosome"/>
</dbReference>
<dbReference type="GO" id="GO:0030170">
    <property type="term" value="F:pyridoxal phosphate binding"/>
    <property type="evidence" value="ECO:0007669"/>
    <property type="project" value="TreeGrafter"/>
</dbReference>
<dbReference type="GO" id="GO:0047302">
    <property type="term" value="F:UDP-2-acetamido-4-amino-2,4,6-trideoxyglucose transaminase activity"/>
    <property type="evidence" value="ECO:0007669"/>
    <property type="project" value="UniProtKB-EC"/>
</dbReference>
<dbReference type="GO" id="GO:0000271">
    <property type="term" value="P:polysaccharide biosynthetic process"/>
    <property type="evidence" value="ECO:0007669"/>
    <property type="project" value="TreeGrafter"/>
</dbReference>
<dbReference type="GO" id="GO:0006486">
    <property type="term" value="P:protein glycosylation"/>
    <property type="evidence" value="ECO:0007669"/>
    <property type="project" value="UniProtKB-UniPathway"/>
</dbReference>
<dbReference type="CDD" id="cd00616">
    <property type="entry name" value="AHBA_syn"/>
    <property type="match status" value="1"/>
</dbReference>
<dbReference type="Gene3D" id="3.90.1150.10">
    <property type="entry name" value="Aspartate Aminotransferase, domain 1"/>
    <property type="match status" value="1"/>
</dbReference>
<dbReference type="Gene3D" id="3.40.640.10">
    <property type="entry name" value="Type I PLP-dependent aspartate aminotransferase-like (Major domain)"/>
    <property type="match status" value="1"/>
</dbReference>
<dbReference type="InterPro" id="IPR000653">
    <property type="entry name" value="DegT/StrS_aminotransferase"/>
</dbReference>
<dbReference type="InterPro" id="IPR015424">
    <property type="entry name" value="PyrdxlP-dep_Trfase"/>
</dbReference>
<dbReference type="InterPro" id="IPR015421">
    <property type="entry name" value="PyrdxlP-dep_Trfase_major"/>
</dbReference>
<dbReference type="InterPro" id="IPR015422">
    <property type="entry name" value="PyrdxlP-dep_Trfase_small"/>
</dbReference>
<dbReference type="PANTHER" id="PTHR30244:SF34">
    <property type="entry name" value="DTDP-4-AMINO-4,6-DIDEOXYGALACTOSE TRANSAMINASE"/>
    <property type="match status" value="1"/>
</dbReference>
<dbReference type="PANTHER" id="PTHR30244">
    <property type="entry name" value="TRANSAMINASE"/>
    <property type="match status" value="1"/>
</dbReference>
<dbReference type="Pfam" id="PF01041">
    <property type="entry name" value="DegT_DnrJ_EryC1"/>
    <property type="match status" value="1"/>
</dbReference>
<dbReference type="PIRSF" id="PIRSF000390">
    <property type="entry name" value="PLP_StrS"/>
    <property type="match status" value="1"/>
</dbReference>
<dbReference type="SUPFAM" id="SSF53383">
    <property type="entry name" value="PLP-dependent transferases"/>
    <property type="match status" value="1"/>
</dbReference>
<evidence type="ECO:0000250" key="1"/>
<evidence type="ECO:0000269" key="2">
    <source>
    </source>
</evidence>
<evidence type="ECO:0000269" key="3">
    <source>
    </source>
</evidence>
<evidence type="ECO:0000305" key="4"/>
<evidence type="ECO:0007829" key="5">
    <source>
        <dbReference type="PDB" id="4ZTC"/>
    </source>
</evidence>
<proteinExistence type="evidence at protein level"/>
<organism>
    <name type="scientific">Campylobacter jejuni subsp. jejuni serotype O:2 (strain ATCC 700819 / NCTC 11168)</name>
    <dbReference type="NCBI Taxonomy" id="192222"/>
    <lineage>
        <taxon>Bacteria</taxon>
        <taxon>Pseudomonadati</taxon>
        <taxon>Campylobacterota</taxon>
        <taxon>Epsilonproteobacteria</taxon>
        <taxon>Campylobacterales</taxon>
        <taxon>Campylobacteraceae</taxon>
        <taxon>Campylobacter</taxon>
    </lineage>
</organism>
<accession>Q0P9D3</accession>
<feature type="chain" id="PRO_0000418960" description="UDP-N-acetylbacillosamine transaminase">
    <location>
        <begin position="1"/>
        <end position="386"/>
    </location>
</feature>
<feature type="binding site" evidence="1">
    <location>
        <begin position="25"/>
        <end position="28"/>
    </location>
    <ligand>
        <name>substrate</name>
    </ligand>
</feature>
<feature type="binding site" evidence="1">
    <location>
        <position position="56"/>
    </location>
    <ligand>
        <name>substrate</name>
    </ligand>
</feature>
<feature type="binding site" evidence="1">
    <location>
        <position position="179"/>
    </location>
    <ligand>
        <name>substrate</name>
    </ligand>
</feature>
<feature type="binding site" evidence="1">
    <location>
        <position position="227"/>
    </location>
    <ligand>
        <name>substrate</name>
    </ligand>
</feature>
<feature type="binding site" evidence="1">
    <location>
        <begin position="325"/>
        <end position="328"/>
    </location>
    <ligand>
        <name>substrate</name>
    </ligand>
</feature>
<feature type="modified residue" description="N6-(pyridoxal phosphate)lysine" evidence="1">
    <location>
        <position position="184"/>
    </location>
</feature>
<feature type="mutagenesis site" description="Does not affect catalytic activity." evidence="3">
    <original>L</original>
    <variation>F</variation>
    <location>
        <position position="131"/>
    </location>
</feature>
<feature type="mutagenesis site" description="Does not affect catalytic activity." evidence="3">
    <original>E</original>
    <variation>H</variation>
    <location>
        <position position="158"/>
    </location>
</feature>
<feature type="helix" evidence="5">
    <location>
        <begin position="14"/>
        <end position="24"/>
    </location>
</feature>
<feature type="helix" evidence="5">
    <location>
        <begin position="32"/>
        <end position="45"/>
    </location>
</feature>
<feature type="strand" evidence="5">
    <location>
        <begin position="50"/>
        <end position="54"/>
    </location>
</feature>
<feature type="helix" evidence="5">
    <location>
        <begin position="56"/>
        <end position="67"/>
    </location>
</feature>
<feature type="strand" evidence="5">
    <location>
        <begin position="74"/>
        <end position="81"/>
    </location>
</feature>
<feature type="helix" evidence="5">
    <location>
        <begin position="83"/>
        <end position="85"/>
    </location>
</feature>
<feature type="helix" evidence="5">
    <location>
        <begin position="87"/>
        <end position="92"/>
    </location>
</feature>
<feature type="strand" evidence="5">
    <location>
        <begin position="95"/>
        <end position="99"/>
    </location>
</feature>
<feature type="strand" evidence="5">
    <location>
        <begin position="105"/>
        <end position="107"/>
    </location>
</feature>
<feature type="helix" evidence="5">
    <location>
        <begin position="109"/>
        <end position="117"/>
    </location>
</feature>
<feature type="strand" evidence="5">
    <location>
        <begin position="125"/>
        <end position="129"/>
    </location>
</feature>
<feature type="helix" evidence="5">
    <location>
        <begin position="131"/>
        <end position="133"/>
    </location>
</feature>
<feature type="helix" evidence="5">
    <location>
        <begin position="138"/>
        <end position="148"/>
    </location>
</feature>
<feature type="strand" evidence="5">
    <location>
        <begin position="151"/>
        <end position="155"/>
    </location>
</feature>
<feature type="strand" evidence="5">
    <location>
        <begin position="171"/>
        <end position="179"/>
    </location>
</feature>
<feature type="strand" evidence="5">
    <location>
        <begin position="184"/>
        <end position="186"/>
    </location>
</feature>
<feature type="strand" evidence="5">
    <location>
        <begin position="188"/>
        <end position="190"/>
    </location>
</feature>
<feature type="strand" evidence="5">
    <location>
        <begin position="192"/>
        <end position="197"/>
    </location>
</feature>
<feature type="helix" evidence="5">
    <location>
        <begin position="199"/>
        <end position="209"/>
    </location>
</feature>
<feature type="strand" evidence="5">
    <location>
        <begin position="215"/>
        <end position="218"/>
    </location>
</feature>
<feature type="helix" evidence="5">
    <location>
        <begin position="232"/>
        <end position="242"/>
    </location>
</feature>
<feature type="helix" evidence="5">
    <location>
        <begin position="245"/>
        <end position="263"/>
    </location>
</feature>
<feature type="turn" evidence="5">
    <location>
        <begin position="264"/>
        <end position="266"/>
    </location>
</feature>
<feature type="strand" evidence="5">
    <location>
        <begin position="284"/>
        <end position="288"/>
    </location>
</feature>
<feature type="helix" evidence="5">
    <location>
        <begin position="291"/>
        <end position="293"/>
    </location>
</feature>
<feature type="strand" evidence="5">
    <location>
        <begin position="299"/>
        <end position="302"/>
    </location>
</feature>
<feature type="helix" evidence="5">
    <location>
        <begin position="312"/>
        <end position="323"/>
    </location>
</feature>
<feature type="helix" evidence="5">
    <location>
        <begin position="335"/>
        <end position="337"/>
    </location>
</feature>
<feature type="helix" evidence="5">
    <location>
        <begin position="339"/>
        <end position="341"/>
    </location>
</feature>
<feature type="strand" evidence="5">
    <location>
        <begin position="345"/>
        <end position="348"/>
    </location>
</feature>
<feature type="helix" evidence="5">
    <location>
        <begin position="351"/>
        <end position="358"/>
    </location>
</feature>
<feature type="strand" evidence="5">
    <location>
        <begin position="359"/>
        <end position="361"/>
    </location>
</feature>
<feature type="helix" evidence="5">
    <location>
        <begin position="370"/>
        <end position="384"/>
    </location>
</feature>
<reference key="1">
    <citation type="journal article" date="2000" name="Nature">
        <title>The genome sequence of the food-borne pathogen Campylobacter jejuni reveals hypervariable sequences.</title>
        <authorList>
            <person name="Parkhill J."/>
            <person name="Wren B.W."/>
            <person name="Mungall K.L."/>
            <person name="Ketley J.M."/>
            <person name="Churcher C.M."/>
            <person name="Basham D."/>
            <person name="Chillingworth T."/>
            <person name="Davies R.M."/>
            <person name="Feltwell T."/>
            <person name="Holroyd S."/>
            <person name="Jagels K."/>
            <person name="Karlyshev A.V."/>
            <person name="Moule S."/>
            <person name="Pallen M.J."/>
            <person name="Penn C.W."/>
            <person name="Quail M.A."/>
            <person name="Rajandream M.A."/>
            <person name="Rutherford K.M."/>
            <person name="van Vliet A.H.M."/>
            <person name="Whitehead S."/>
            <person name="Barrell B.G."/>
        </authorList>
    </citation>
    <scope>NUCLEOTIDE SEQUENCE [LARGE SCALE GENOMIC DNA]</scope>
    <source>
        <strain>ATCC 700819 / NCTC 11168</strain>
    </source>
</reference>
<reference key="2">
    <citation type="journal article" date="2006" name="J. Biol. Chem.">
        <title>Functional characterization of dehydratase/aminotransferase pairs from Helicobacter and Campylobacter: enzymes distinguishing the pseudaminic acid and bacillosamine biosynthetic pathways.</title>
        <authorList>
            <person name="Schoenhofen I.C."/>
            <person name="McNally D.J."/>
            <person name="Vinogradov E."/>
            <person name="Whitfield D."/>
            <person name="Young N.M."/>
            <person name="Dick S."/>
            <person name="Wakarchuk W.W."/>
            <person name="Brisson J.R."/>
            <person name="Logan S.M."/>
        </authorList>
    </citation>
    <scope>FUNCTION</scope>
    <scope>CATALYTIC ACTIVITY</scope>
    <scope>BIOPHYSICOCHEMICAL PROPERTIES</scope>
    <source>
        <strain>ATCC 700819 / NCTC 11168</strain>
    </source>
</reference>
<reference key="3">
    <citation type="journal article" date="2006" name="J. Biol. Chem.">
        <title>Cj1121c, a novel UDP-4-keto-6-deoxy-GlcNAc C-4 aminotransferase essential for protein glycosylation and virulence in Campylobacter jejuni.</title>
        <authorList>
            <person name="Vijayakumar S."/>
            <person name="Merkx-Jacques A."/>
            <person name="Ratnayake D.B."/>
            <person name="Gryski I."/>
            <person name="Obhi R.K."/>
            <person name="Houle S."/>
            <person name="Dozois C.M."/>
            <person name="Creuzenet C."/>
        </authorList>
    </citation>
    <scope>FUNCTION</scope>
    <scope>CATALYTIC ACTIVITY</scope>
    <scope>COFACTOR</scope>
    <scope>BIOPHYSICOCHEMICAL PROPERTIES</scope>
    <scope>DISRUPTION PHENOTYPE</scope>
    <scope>MUTAGENESIS OF LEU-131 AND GLU-158</scope>
    <source>
        <strain>ATCC 700819 / NCTC 11168</strain>
    </source>
</reference>
<gene>
    <name type="primary">pglE</name>
    <name type="ordered locus">Cj1121c</name>
</gene>
<protein>
    <recommendedName>
        <fullName>UDP-N-acetylbacillosamine transaminase</fullName>
        <ecNumber>2.6.1.34</ecNumber>
    </recommendedName>
    <alternativeName>
        <fullName>Protein glycosylation pathway protein E</fullName>
    </alternativeName>
    <alternativeName>
        <fullName>UDP-4-amino-4,6-dideoxy-N-acetyl-alpha-D-glucosamine transaminase</fullName>
    </alternativeName>
    <alternativeName>
        <fullName>UDP-4-keto-6-deoxy-GlcNAc C4 aminotransferase</fullName>
    </alternativeName>
</protein>